<dbReference type="EMBL" id="AJ938182">
    <property type="protein sequence ID" value="CAI80502.1"/>
    <property type="molecule type" value="Genomic_DNA"/>
</dbReference>
<dbReference type="RefSeq" id="WP_001016306.1">
    <property type="nucleotide sequence ID" value="NC_007622.1"/>
</dbReference>
<dbReference type="SMR" id="Q2YWT9"/>
<dbReference type="KEGG" id="sab:SAB0814c"/>
<dbReference type="HOGENOM" id="CLU_125825_1_3_9"/>
<dbReference type="GO" id="GO:0005886">
    <property type="term" value="C:plasma membrane"/>
    <property type="evidence" value="ECO:0007669"/>
    <property type="project" value="UniProtKB-SubCell"/>
</dbReference>
<dbReference type="GO" id="GO:0015385">
    <property type="term" value="F:sodium:proton antiporter activity"/>
    <property type="evidence" value="ECO:0007669"/>
    <property type="project" value="TreeGrafter"/>
</dbReference>
<dbReference type="InterPro" id="IPR007208">
    <property type="entry name" value="MrpF/PhaF-like"/>
</dbReference>
<dbReference type="NCBIfam" id="NF009248">
    <property type="entry name" value="PRK12600.1"/>
    <property type="match status" value="1"/>
</dbReference>
<dbReference type="PANTHER" id="PTHR34702">
    <property type="entry name" value="NA(+)/H(+) ANTIPORTER SUBUNIT F1"/>
    <property type="match status" value="1"/>
</dbReference>
<dbReference type="PANTHER" id="PTHR34702:SF1">
    <property type="entry name" value="NA(+)_H(+) ANTIPORTER SUBUNIT F"/>
    <property type="match status" value="1"/>
</dbReference>
<dbReference type="Pfam" id="PF04066">
    <property type="entry name" value="MrpF_PhaF"/>
    <property type="match status" value="1"/>
</dbReference>
<dbReference type="PIRSF" id="PIRSF028784">
    <property type="entry name" value="MrpF"/>
    <property type="match status" value="1"/>
</dbReference>
<protein>
    <recommendedName>
        <fullName>Na(+)/H(+) antiporter subunit F1</fullName>
    </recommendedName>
    <alternativeName>
        <fullName>Mnh complex subunit F1</fullName>
    </alternativeName>
</protein>
<accession>Q2YWT9</accession>
<comment type="function">
    <text evidence="1">Mnh complex is a Na(+)/H(+) antiporter involved in Na(+) excretion.</text>
</comment>
<comment type="subunit">
    <text evidence="1">May form a heterooligomeric complex that consists of seven subunits: mnhA1, mnhB1, mnhC1, mnhD1, mnhE1, mnhF1 and mnhG1.</text>
</comment>
<comment type="subcellular location">
    <subcellularLocation>
        <location evidence="3">Cell membrane</location>
        <topology evidence="3">Multi-pass membrane protein</topology>
    </subcellularLocation>
</comment>
<comment type="similarity">
    <text evidence="3">Belongs to the CPA3 antiporters (TC 2.A.63) subunit F family.</text>
</comment>
<proteinExistence type="inferred from homology"/>
<gene>
    <name type="primary">mnhF1</name>
    <name type="ordered locus">SAB0814c</name>
</gene>
<keyword id="KW-0050">Antiport</keyword>
<keyword id="KW-1003">Cell membrane</keyword>
<keyword id="KW-0375">Hydrogen ion transport</keyword>
<keyword id="KW-0406">Ion transport</keyword>
<keyword id="KW-0472">Membrane</keyword>
<keyword id="KW-0915">Sodium</keyword>
<keyword id="KW-0739">Sodium transport</keyword>
<keyword id="KW-0812">Transmembrane</keyword>
<keyword id="KW-1133">Transmembrane helix</keyword>
<keyword id="KW-0813">Transport</keyword>
<sequence>MNHNVIIVIALIIVVISMLAMLIRVVLGPSLADRVVALDAIGLQLMAVIALFSILLNIKYMIVVIMMIGILAFLGTAVFSKFMDKGKVIEHDQNHTD</sequence>
<reference key="1">
    <citation type="journal article" date="2007" name="PLoS ONE">
        <title>Molecular correlates of host specialization in Staphylococcus aureus.</title>
        <authorList>
            <person name="Herron-Olson L."/>
            <person name="Fitzgerald J.R."/>
            <person name="Musser J.M."/>
            <person name="Kapur V."/>
        </authorList>
    </citation>
    <scope>NUCLEOTIDE SEQUENCE [LARGE SCALE GENOMIC DNA]</scope>
    <source>
        <strain>bovine RF122 / ET3-1</strain>
    </source>
</reference>
<organism>
    <name type="scientific">Staphylococcus aureus (strain bovine RF122 / ET3-1)</name>
    <dbReference type="NCBI Taxonomy" id="273036"/>
    <lineage>
        <taxon>Bacteria</taxon>
        <taxon>Bacillati</taxon>
        <taxon>Bacillota</taxon>
        <taxon>Bacilli</taxon>
        <taxon>Bacillales</taxon>
        <taxon>Staphylococcaceae</taxon>
        <taxon>Staphylococcus</taxon>
    </lineage>
</organism>
<name>MNHF1_STAAB</name>
<feature type="chain" id="PRO_0000372153" description="Na(+)/H(+) antiporter subunit F1">
    <location>
        <begin position="1"/>
        <end position="97"/>
    </location>
</feature>
<feature type="transmembrane region" description="Helical" evidence="2">
    <location>
        <begin position="3"/>
        <end position="23"/>
    </location>
</feature>
<feature type="transmembrane region" description="Helical" evidence="2">
    <location>
        <begin position="35"/>
        <end position="55"/>
    </location>
</feature>
<feature type="transmembrane region" description="Helical" evidence="2">
    <location>
        <begin position="60"/>
        <end position="80"/>
    </location>
</feature>
<evidence type="ECO:0000250" key="1"/>
<evidence type="ECO:0000255" key="2"/>
<evidence type="ECO:0000305" key="3"/>